<feature type="chain" id="PRO_0000189802" description="Gamma-glutamyl phosphate reductase">
    <location>
        <begin position="1"/>
        <end position="415"/>
    </location>
</feature>
<feature type="helix" evidence="2">
    <location>
        <begin position="3"/>
        <end position="18"/>
    </location>
</feature>
<feature type="helix" evidence="2">
    <location>
        <begin position="23"/>
        <end position="39"/>
    </location>
</feature>
<feature type="helix" evidence="2">
    <location>
        <begin position="41"/>
        <end position="57"/>
    </location>
</feature>
<feature type="helix" evidence="2">
    <location>
        <begin position="62"/>
        <end position="68"/>
    </location>
</feature>
<feature type="helix" evidence="2">
    <location>
        <begin position="72"/>
        <end position="87"/>
    </location>
</feature>
<feature type="strand" evidence="2">
    <location>
        <begin position="95"/>
        <end position="100"/>
    </location>
</feature>
<feature type="strand" evidence="2">
    <location>
        <begin position="106"/>
        <end position="113"/>
    </location>
</feature>
<feature type="strand" evidence="2">
    <location>
        <begin position="117"/>
        <end position="120"/>
    </location>
</feature>
<feature type="helix" evidence="2">
    <location>
        <begin position="126"/>
        <end position="137"/>
    </location>
</feature>
<feature type="strand" evidence="2">
    <location>
        <begin position="142"/>
        <end position="145"/>
    </location>
</feature>
<feature type="helix" evidence="2">
    <location>
        <begin position="148"/>
        <end position="150"/>
    </location>
</feature>
<feature type="helix" evidence="2">
    <location>
        <begin position="151"/>
        <end position="165"/>
    </location>
</feature>
<feature type="strand" evidence="2">
    <location>
        <begin position="168"/>
        <end position="170"/>
    </location>
</feature>
<feature type="helix" evidence="2">
    <location>
        <begin position="172"/>
        <end position="174"/>
    </location>
</feature>
<feature type="strand" evidence="2">
    <location>
        <begin position="175"/>
        <end position="177"/>
    </location>
</feature>
<feature type="helix" evidence="2">
    <location>
        <begin position="184"/>
        <end position="189"/>
    </location>
</feature>
<feature type="turn" evidence="2">
    <location>
        <begin position="193"/>
        <end position="195"/>
    </location>
</feature>
<feature type="strand" evidence="2">
    <location>
        <begin position="197"/>
        <end position="201"/>
    </location>
</feature>
<feature type="helix" evidence="2">
    <location>
        <begin position="205"/>
        <end position="214"/>
    </location>
</feature>
<feature type="strand" evidence="2">
    <location>
        <begin position="227"/>
        <end position="231"/>
    </location>
</feature>
<feature type="helix" evidence="2">
    <location>
        <begin position="237"/>
        <end position="249"/>
    </location>
</feature>
<feature type="strand" evidence="2">
    <location>
        <begin position="257"/>
        <end position="264"/>
    </location>
</feature>
<feature type="helix" evidence="2">
    <location>
        <begin position="265"/>
        <end position="281"/>
    </location>
</feature>
<feature type="strand" evidence="2">
    <location>
        <begin position="285"/>
        <end position="288"/>
    </location>
</feature>
<feature type="helix" evidence="2">
    <location>
        <begin position="290"/>
        <end position="295"/>
    </location>
</feature>
<feature type="strand" evidence="2">
    <location>
        <begin position="299"/>
        <end position="301"/>
    </location>
</feature>
<feature type="helix" evidence="2">
    <location>
        <begin position="304"/>
        <end position="306"/>
    </location>
</feature>
<feature type="strand" evidence="2">
    <location>
        <begin position="313"/>
        <end position="323"/>
    </location>
</feature>
<feature type="helix" evidence="2">
    <location>
        <begin position="324"/>
        <end position="334"/>
    </location>
</feature>
<feature type="strand" evidence="2">
    <location>
        <begin position="337"/>
        <end position="343"/>
    </location>
</feature>
<feature type="helix" evidence="2">
    <location>
        <begin position="347"/>
        <end position="356"/>
    </location>
</feature>
<feature type="strand" evidence="2">
    <location>
        <begin position="359"/>
        <end position="366"/>
    </location>
</feature>
<feature type="helix" evidence="2">
    <location>
        <begin position="368"/>
        <end position="370"/>
    </location>
</feature>
<feature type="turn" evidence="2">
    <location>
        <begin position="373"/>
        <end position="377"/>
    </location>
</feature>
<feature type="strand" evidence="2">
    <location>
        <begin position="387"/>
        <end position="390"/>
    </location>
</feature>
<feature type="helix" evidence="2">
    <location>
        <begin position="398"/>
        <end position="400"/>
    </location>
</feature>
<feature type="strand" evidence="2">
    <location>
        <begin position="401"/>
        <end position="408"/>
    </location>
</feature>
<gene>
    <name evidence="1" type="primary">proA</name>
    <name type="ordered locus">TM_0293</name>
</gene>
<keyword id="KW-0002">3D-structure</keyword>
<keyword id="KW-0028">Amino-acid biosynthesis</keyword>
<keyword id="KW-0963">Cytoplasm</keyword>
<keyword id="KW-0521">NADP</keyword>
<keyword id="KW-0560">Oxidoreductase</keyword>
<keyword id="KW-0641">Proline biosynthesis</keyword>
<keyword id="KW-1185">Reference proteome</keyword>
<sequence>MDELLEKAKKVREAWDVLRNATTREKNKAIKKIAEKLDERRKEILEANRIDVEKARERGVKESLVDRLALNDKRIDEMIKACETVIGLKDPVGEVIDSWVREDGLRIARVRVPIGPIGIIYESRPNVTVETTILALKSGNTILLRGGSDALNSNKAIVSAIREALKETEIPESSVEFIENTDRSLVLEMIRLREYLSLVIPRGGYGLISFVRDNATVPVLETGVGNCHIFVDESADLKKAVPVIINAKTQRPGTCNAAEKLLVHEKIAKEFLPVIVEELRKHGVEVRGCEKTREIVPDVVPATEDDWPTEYLDLIIAIKVVKNVDEAIEHIKKYSTGHSESILTENYSNAKKFVSEIDAAAVYVNASTRFTDGGQFGFGAEIGISTQRFHARGPVGLRELTTYKFVVLGEYHVRE</sequence>
<organism>
    <name type="scientific">Thermotoga maritima (strain ATCC 43589 / DSM 3109 / JCM 10099 / NBRC 100826 / MSB8)</name>
    <dbReference type="NCBI Taxonomy" id="243274"/>
    <lineage>
        <taxon>Bacteria</taxon>
        <taxon>Thermotogati</taxon>
        <taxon>Thermotogota</taxon>
        <taxon>Thermotogae</taxon>
        <taxon>Thermotogales</taxon>
        <taxon>Thermotogaceae</taxon>
        <taxon>Thermotoga</taxon>
    </lineage>
</organism>
<name>PROA_THEMA</name>
<accession>Q9WYC9</accession>
<evidence type="ECO:0000255" key="1">
    <source>
        <dbReference type="HAMAP-Rule" id="MF_00412"/>
    </source>
</evidence>
<evidence type="ECO:0007829" key="2">
    <source>
        <dbReference type="PDB" id="1O20"/>
    </source>
</evidence>
<comment type="function">
    <text evidence="1">Catalyzes the NADPH-dependent reduction of L-glutamate 5-phosphate into L-glutamate 5-semialdehyde and phosphate. The product spontaneously undergoes cyclization to form 1-pyrroline-5-carboxylate.</text>
</comment>
<comment type="catalytic activity">
    <reaction evidence="1">
        <text>L-glutamate 5-semialdehyde + phosphate + NADP(+) = L-glutamyl 5-phosphate + NADPH + H(+)</text>
        <dbReference type="Rhea" id="RHEA:19541"/>
        <dbReference type="ChEBI" id="CHEBI:15378"/>
        <dbReference type="ChEBI" id="CHEBI:43474"/>
        <dbReference type="ChEBI" id="CHEBI:57783"/>
        <dbReference type="ChEBI" id="CHEBI:58066"/>
        <dbReference type="ChEBI" id="CHEBI:58274"/>
        <dbReference type="ChEBI" id="CHEBI:58349"/>
        <dbReference type="EC" id="1.2.1.41"/>
    </reaction>
</comment>
<comment type="pathway">
    <text evidence="1">Amino-acid biosynthesis; L-proline biosynthesis; L-glutamate 5-semialdehyde from L-glutamate: step 2/2.</text>
</comment>
<comment type="subcellular location">
    <subcellularLocation>
        <location evidence="1">Cytoplasm</location>
    </subcellularLocation>
</comment>
<comment type="similarity">
    <text evidence="1">Belongs to the gamma-glutamyl phosphate reductase family.</text>
</comment>
<reference key="1">
    <citation type="journal article" date="1999" name="Nature">
        <title>Evidence for lateral gene transfer between Archaea and Bacteria from genome sequence of Thermotoga maritima.</title>
        <authorList>
            <person name="Nelson K.E."/>
            <person name="Clayton R.A."/>
            <person name="Gill S.R."/>
            <person name="Gwinn M.L."/>
            <person name="Dodson R.J."/>
            <person name="Haft D.H."/>
            <person name="Hickey E.K."/>
            <person name="Peterson J.D."/>
            <person name="Nelson W.C."/>
            <person name="Ketchum K.A."/>
            <person name="McDonald L.A."/>
            <person name="Utterback T.R."/>
            <person name="Malek J.A."/>
            <person name="Linher K.D."/>
            <person name="Garrett M.M."/>
            <person name="Stewart A.M."/>
            <person name="Cotton M.D."/>
            <person name="Pratt M.S."/>
            <person name="Phillips C.A."/>
            <person name="Richardson D.L."/>
            <person name="Heidelberg J.F."/>
            <person name="Sutton G.G."/>
            <person name="Fleischmann R.D."/>
            <person name="Eisen J.A."/>
            <person name="White O."/>
            <person name="Salzberg S.L."/>
            <person name="Smith H.O."/>
            <person name="Venter J.C."/>
            <person name="Fraser C.M."/>
        </authorList>
    </citation>
    <scope>NUCLEOTIDE SEQUENCE [LARGE SCALE GENOMIC DNA]</scope>
    <source>
        <strain>ATCC 43589 / DSM 3109 / JCM 10099 / NBRC 100826 / MSB8</strain>
    </source>
</reference>
<dbReference type="EC" id="1.2.1.41" evidence="1"/>
<dbReference type="EMBL" id="AE000512">
    <property type="protein sequence ID" value="AAD35381.1"/>
    <property type="molecule type" value="Genomic_DNA"/>
</dbReference>
<dbReference type="PIR" id="E72394">
    <property type="entry name" value="E72394"/>
</dbReference>
<dbReference type="RefSeq" id="NP_228105.1">
    <property type="nucleotide sequence ID" value="NC_000853.1"/>
</dbReference>
<dbReference type="RefSeq" id="WP_004083010.1">
    <property type="nucleotide sequence ID" value="NC_000853.1"/>
</dbReference>
<dbReference type="PDB" id="1O20">
    <property type="method" value="X-ray"/>
    <property type="resolution" value="2.00 A"/>
    <property type="chains" value="A=1-415"/>
</dbReference>
<dbReference type="PDBsum" id="1O20"/>
<dbReference type="SMR" id="Q9WYC9"/>
<dbReference type="FunCoup" id="Q9WYC9">
    <property type="interactions" value="292"/>
</dbReference>
<dbReference type="STRING" id="243274.TM_0293"/>
<dbReference type="PaxDb" id="243274-THEMA_03260"/>
<dbReference type="EnsemblBacteria" id="AAD35381">
    <property type="protein sequence ID" value="AAD35381"/>
    <property type="gene ID" value="TM_0293"/>
</dbReference>
<dbReference type="KEGG" id="tma:TM0293"/>
<dbReference type="KEGG" id="tmi:THEMA_03260"/>
<dbReference type="KEGG" id="tmm:Tmari_0291"/>
<dbReference type="KEGG" id="tmw:THMA_0300"/>
<dbReference type="eggNOG" id="COG0014">
    <property type="taxonomic scope" value="Bacteria"/>
</dbReference>
<dbReference type="InParanoid" id="Q9WYC9"/>
<dbReference type="OrthoDB" id="9809970at2"/>
<dbReference type="BRENDA" id="1.2.1.41">
    <property type="organism ID" value="6331"/>
</dbReference>
<dbReference type="UniPathway" id="UPA00098">
    <property type="reaction ID" value="UER00360"/>
</dbReference>
<dbReference type="EvolutionaryTrace" id="Q9WYC9"/>
<dbReference type="Proteomes" id="UP000008183">
    <property type="component" value="Chromosome"/>
</dbReference>
<dbReference type="GO" id="GO:0005737">
    <property type="term" value="C:cytoplasm"/>
    <property type="evidence" value="ECO:0007669"/>
    <property type="project" value="UniProtKB-SubCell"/>
</dbReference>
<dbReference type="GO" id="GO:0004350">
    <property type="term" value="F:glutamate-5-semialdehyde dehydrogenase activity"/>
    <property type="evidence" value="ECO:0000318"/>
    <property type="project" value="GO_Central"/>
</dbReference>
<dbReference type="GO" id="GO:0050661">
    <property type="term" value="F:NADP binding"/>
    <property type="evidence" value="ECO:0007669"/>
    <property type="project" value="InterPro"/>
</dbReference>
<dbReference type="GO" id="GO:0055129">
    <property type="term" value="P:L-proline biosynthetic process"/>
    <property type="evidence" value="ECO:0007669"/>
    <property type="project" value="UniProtKB-UniRule"/>
</dbReference>
<dbReference type="CDD" id="cd07079">
    <property type="entry name" value="ALDH_F18-19_ProA-GPR"/>
    <property type="match status" value="1"/>
</dbReference>
<dbReference type="FunFam" id="3.40.309.10:FF:000006">
    <property type="entry name" value="Gamma-glutamyl phosphate reductase"/>
    <property type="match status" value="1"/>
</dbReference>
<dbReference type="Gene3D" id="3.40.605.10">
    <property type="entry name" value="Aldehyde Dehydrogenase, Chain A, domain 1"/>
    <property type="match status" value="1"/>
</dbReference>
<dbReference type="Gene3D" id="3.40.309.10">
    <property type="entry name" value="Aldehyde Dehydrogenase, Chain A, domain 2"/>
    <property type="match status" value="1"/>
</dbReference>
<dbReference type="HAMAP" id="MF_00412">
    <property type="entry name" value="ProA"/>
    <property type="match status" value="1"/>
</dbReference>
<dbReference type="InterPro" id="IPR016161">
    <property type="entry name" value="Ald_DH/histidinol_DH"/>
</dbReference>
<dbReference type="InterPro" id="IPR016163">
    <property type="entry name" value="Ald_DH_C"/>
</dbReference>
<dbReference type="InterPro" id="IPR016162">
    <property type="entry name" value="Ald_DH_N"/>
</dbReference>
<dbReference type="InterPro" id="IPR015590">
    <property type="entry name" value="Aldehyde_DH_dom"/>
</dbReference>
<dbReference type="InterPro" id="IPR020593">
    <property type="entry name" value="G-glutamylP_reductase_CS"/>
</dbReference>
<dbReference type="InterPro" id="IPR012134">
    <property type="entry name" value="Glu-5-SA_DH"/>
</dbReference>
<dbReference type="InterPro" id="IPR000965">
    <property type="entry name" value="GPR_dom"/>
</dbReference>
<dbReference type="NCBIfam" id="NF001221">
    <property type="entry name" value="PRK00197.1"/>
    <property type="match status" value="1"/>
</dbReference>
<dbReference type="NCBIfam" id="TIGR00407">
    <property type="entry name" value="proA"/>
    <property type="match status" value="1"/>
</dbReference>
<dbReference type="PANTHER" id="PTHR11063:SF8">
    <property type="entry name" value="DELTA-1-PYRROLINE-5-CARBOXYLATE SYNTHASE"/>
    <property type="match status" value="1"/>
</dbReference>
<dbReference type="PANTHER" id="PTHR11063">
    <property type="entry name" value="GLUTAMATE SEMIALDEHYDE DEHYDROGENASE"/>
    <property type="match status" value="1"/>
</dbReference>
<dbReference type="Pfam" id="PF00171">
    <property type="entry name" value="Aldedh"/>
    <property type="match status" value="2"/>
</dbReference>
<dbReference type="PIRSF" id="PIRSF000151">
    <property type="entry name" value="GPR"/>
    <property type="match status" value="1"/>
</dbReference>
<dbReference type="SUPFAM" id="SSF53720">
    <property type="entry name" value="ALDH-like"/>
    <property type="match status" value="1"/>
</dbReference>
<dbReference type="PROSITE" id="PS01223">
    <property type="entry name" value="PROA"/>
    <property type="match status" value="1"/>
</dbReference>
<protein>
    <recommendedName>
        <fullName evidence="1">Gamma-glutamyl phosphate reductase</fullName>
        <shortName evidence="1">GPR</shortName>
        <ecNumber evidence="1">1.2.1.41</ecNumber>
    </recommendedName>
    <alternativeName>
        <fullName evidence="1">Glutamate-5-semialdehyde dehydrogenase</fullName>
    </alternativeName>
    <alternativeName>
        <fullName evidence="1">Glutamyl-gamma-semialdehyde dehydrogenase</fullName>
        <shortName evidence="1">GSA dehydrogenase</shortName>
    </alternativeName>
</protein>
<proteinExistence type="evidence at protein level"/>